<reference key="1">
    <citation type="journal article" date="2008" name="Infect. Immun.">
        <title>Genomic comparison of virulent Rickettsia rickettsii Sheila Smith and avirulent Rickettsia rickettsii Iowa.</title>
        <authorList>
            <person name="Ellison D.W."/>
            <person name="Clark T.R."/>
            <person name="Sturdevant D.E."/>
            <person name="Virtaneva K."/>
            <person name="Porcella S.F."/>
            <person name="Hackstadt T."/>
        </authorList>
    </citation>
    <scope>NUCLEOTIDE SEQUENCE [LARGE SCALE GENOMIC DNA]</scope>
    <source>
        <strain>Iowa</strain>
    </source>
</reference>
<keyword id="KW-0687">Ribonucleoprotein</keyword>
<keyword id="KW-0689">Ribosomal protein</keyword>
<comment type="similarity">
    <text evidence="1">Belongs to the bacterial ribosomal protein bS16 family.</text>
</comment>
<sequence>MAVKIRLARGGAKKRPFYRVVVANATAPRDGDFLEKVGTYDPMLASDNSERVVLKKDRIEYWLGTGAKPTERVAKFIEQAGVTLPEKVKKEMEVKAKNRKARLSKKEAKEA</sequence>
<proteinExistence type="inferred from homology"/>
<evidence type="ECO:0000255" key="1">
    <source>
        <dbReference type="HAMAP-Rule" id="MF_00385"/>
    </source>
</evidence>
<evidence type="ECO:0000305" key="2"/>
<name>RS16_RICRO</name>
<gene>
    <name evidence="1" type="primary">rpsP</name>
    <name type="ordered locus">RrIowa_1590</name>
</gene>
<organism>
    <name type="scientific">Rickettsia rickettsii (strain Iowa)</name>
    <dbReference type="NCBI Taxonomy" id="452659"/>
    <lineage>
        <taxon>Bacteria</taxon>
        <taxon>Pseudomonadati</taxon>
        <taxon>Pseudomonadota</taxon>
        <taxon>Alphaproteobacteria</taxon>
        <taxon>Rickettsiales</taxon>
        <taxon>Rickettsiaceae</taxon>
        <taxon>Rickettsieae</taxon>
        <taxon>Rickettsia</taxon>
        <taxon>spotted fever group</taxon>
    </lineage>
</organism>
<dbReference type="EMBL" id="CP000766">
    <property type="protein sequence ID" value="ABY73305.1"/>
    <property type="molecule type" value="Genomic_DNA"/>
</dbReference>
<dbReference type="RefSeq" id="WP_004997078.1">
    <property type="nucleotide sequence ID" value="NC_010263.3"/>
</dbReference>
<dbReference type="SMR" id="B0BVP5"/>
<dbReference type="GeneID" id="95361740"/>
<dbReference type="KEGG" id="rrj:RrIowa_1590"/>
<dbReference type="eggNOG" id="COG0228">
    <property type="taxonomic scope" value="Bacteria"/>
</dbReference>
<dbReference type="HOGENOM" id="CLU_100590_3_1_5"/>
<dbReference type="Proteomes" id="UP000000796">
    <property type="component" value="Chromosome"/>
</dbReference>
<dbReference type="GO" id="GO:0005737">
    <property type="term" value="C:cytoplasm"/>
    <property type="evidence" value="ECO:0007669"/>
    <property type="project" value="UniProtKB-ARBA"/>
</dbReference>
<dbReference type="GO" id="GO:0015935">
    <property type="term" value="C:small ribosomal subunit"/>
    <property type="evidence" value="ECO:0007669"/>
    <property type="project" value="TreeGrafter"/>
</dbReference>
<dbReference type="GO" id="GO:0003735">
    <property type="term" value="F:structural constituent of ribosome"/>
    <property type="evidence" value="ECO:0007669"/>
    <property type="project" value="InterPro"/>
</dbReference>
<dbReference type="GO" id="GO:0006412">
    <property type="term" value="P:translation"/>
    <property type="evidence" value="ECO:0007669"/>
    <property type="project" value="UniProtKB-UniRule"/>
</dbReference>
<dbReference type="Gene3D" id="3.30.1320.10">
    <property type="match status" value="1"/>
</dbReference>
<dbReference type="HAMAP" id="MF_00385">
    <property type="entry name" value="Ribosomal_bS16"/>
    <property type="match status" value="1"/>
</dbReference>
<dbReference type="InterPro" id="IPR000307">
    <property type="entry name" value="Ribosomal_bS16"/>
</dbReference>
<dbReference type="InterPro" id="IPR020592">
    <property type="entry name" value="Ribosomal_bS16_CS"/>
</dbReference>
<dbReference type="InterPro" id="IPR023803">
    <property type="entry name" value="Ribosomal_bS16_dom_sf"/>
</dbReference>
<dbReference type="NCBIfam" id="TIGR00002">
    <property type="entry name" value="S16"/>
    <property type="match status" value="1"/>
</dbReference>
<dbReference type="PANTHER" id="PTHR12919">
    <property type="entry name" value="30S RIBOSOMAL PROTEIN S16"/>
    <property type="match status" value="1"/>
</dbReference>
<dbReference type="PANTHER" id="PTHR12919:SF20">
    <property type="entry name" value="SMALL RIBOSOMAL SUBUNIT PROTEIN BS16M"/>
    <property type="match status" value="1"/>
</dbReference>
<dbReference type="Pfam" id="PF00886">
    <property type="entry name" value="Ribosomal_S16"/>
    <property type="match status" value="1"/>
</dbReference>
<dbReference type="SUPFAM" id="SSF54565">
    <property type="entry name" value="Ribosomal protein S16"/>
    <property type="match status" value="1"/>
</dbReference>
<dbReference type="PROSITE" id="PS00732">
    <property type="entry name" value="RIBOSOMAL_S16"/>
    <property type="match status" value="1"/>
</dbReference>
<accession>B0BVP5</accession>
<protein>
    <recommendedName>
        <fullName evidence="1">Small ribosomal subunit protein bS16</fullName>
    </recommendedName>
    <alternativeName>
        <fullName evidence="2">30S ribosomal protein S16</fullName>
    </alternativeName>
</protein>
<feature type="chain" id="PRO_1000080164" description="Small ribosomal subunit protein bS16">
    <location>
        <begin position="1"/>
        <end position="111"/>
    </location>
</feature>